<organism>
    <name type="scientific">Hordeum vulgare</name>
    <name type="common">Barley</name>
    <dbReference type="NCBI Taxonomy" id="4513"/>
    <lineage>
        <taxon>Eukaryota</taxon>
        <taxon>Viridiplantae</taxon>
        <taxon>Streptophyta</taxon>
        <taxon>Embryophyta</taxon>
        <taxon>Tracheophyta</taxon>
        <taxon>Spermatophyta</taxon>
        <taxon>Magnoliopsida</taxon>
        <taxon>Liliopsida</taxon>
        <taxon>Poales</taxon>
        <taxon>Poaceae</taxon>
        <taxon>BOP clade</taxon>
        <taxon>Pooideae</taxon>
        <taxon>Triticodae</taxon>
        <taxon>Triticeae</taxon>
        <taxon>Hordeinae</taxon>
        <taxon>Hordeum</taxon>
    </lineage>
</organism>
<keyword id="KW-0134">Cell wall</keyword>
<keyword id="KW-0961">Cell wall biogenesis/degradation</keyword>
<keyword id="KW-0677">Repeat</keyword>
<keyword id="KW-0964">Secreted</keyword>
<keyword id="KW-0732">Signal</keyword>
<comment type="function">
    <text evidence="1">Responsible for plasticity of the cell wall.</text>
</comment>
<comment type="subcellular location">
    <subcellularLocation>
        <location>Secreted</location>
        <location>Cell wall</location>
    </subcellularLocation>
</comment>
<comment type="induction">
    <text>By wounding.</text>
</comment>
<comment type="similarity">
    <text evidence="1">Belongs to the GRP family.</text>
</comment>
<evidence type="ECO:0000305" key="1"/>
<dbReference type="EMBL" id="X52580">
    <property type="protein sequence ID" value="CAA36811.1"/>
    <property type="molecule type" value="Genomic_DNA"/>
</dbReference>
<dbReference type="PIR" id="S10334">
    <property type="entry name" value="S10334"/>
</dbReference>
<dbReference type="SMR" id="P17816"/>
<dbReference type="GO" id="GO:0005576">
    <property type="term" value="C:extracellular region"/>
    <property type="evidence" value="ECO:0007669"/>
    <property type="project" value="UniProtKB-KW"/>
</dbReference>
<dbReference type="GO" id="GO:0071555">
    <property type="term" value="P:cell wall organization"/>
    <property type="evidence" value="ECO:0007669"/>
    <property type="project" value="UniProtKB-KW"/>
</dbReference>
<dbReference type="InterPro" id="IPR010800">
    <property type="entry name" value="GRP"/>
</dbReference>
<dbReference type="Pfam" id="PF07172">
    <property type="entry name" value="GRP"/>
    <property type="match status" value="1"/>
</dbReference>
<dbReference type="PRINTS" id="PR01228">
    <property type="entry name" value="EGGSHELL"/>
</dbReference>
<protein>
    <recommendedName>
        <fullName>Glycine-rich cell wall structural protein</fullName>
    </recommendedName>
</protein>
<sequence length="200" mass="18108">MASKSKGLVVLALLLAAAILVASADEHPQAKKEENEAGVENFFHGGGGHHGHGRGGHGGGGYGGGGGYGGGGGGYPGGGGGYGGGGGGYPGHGGEGGGGYGGGGGYPGHGGEGGGGYGGGGGYHGHGGEGGGGYGGGGGYHGHGGEGGGGYGGGGGGYPGHGGGGGHGGGRCKWGCCGHGFLHHGCRCCARADEVPEVRN</sequence>
<accession>P17816</accession>
<gene>
    <name type="primary">GRP</name>
</gene>
<name>GRP1_HORVU</name>
<reference key="1">
    <citation type="journal article" date="1990" name="Plant Mol. Biol.">
        <title>Nucleotide sequence of a Hordeum vulgare gene encoding a glycine-rich protein with homology to vertebrate cytokeratins.</title>
        <authorList>
            <person name="Rohde W."/>
            <person name="Rosch K."/>
            <person name="Kroeger K."/>
            <person name="Salamini F."/>
        </authorList>
    </citation>
    <scope>NUCLEOTIDE SEQUENCE [GENOMIC DNA]</scope>
    <source>
        <strain>cv. Abyssinian 2231</strain>
        <tissue>Leaf</tissue>
    </source>
</reference>
<feature type="signal peptide">
    <location>
        <begin position="1"/>
        <end position="24"/>
    </location>
</feature>
<feature type="chain" id="PRO_0000021375" description="Glycine-rich cell wall structural protein">
    <location>
        <begin position="25"/>
        <end position="200"/>
    </location>
</feature>
<proteinExistence type="evidence at transcript level"/>